<gene>
    <name type="primary">yibT</name>
    <name type="ordered locus">SSON_3806</name>
</gene>
<protein>
    <recommendedName>
        <fullName>Uncharacterized protein YibT</fullName>
    </recommendedName>
</protein>
<keyword id="KW-1185">Reference proteome</keyword>
<feature type="chain" id="PRO_0000263023" description="Uncharacterized protein YibT">
    <location>
        <begin position="1"/>
        <end position="69"/>
    </location>
</feature>
<reference key="1">
    <citation type="journal article" date="2005" name="Nucleic Acids Res.">
        <title>Genome dynamics and diversity of Shigella species, the etiologic agents of bacillary dysentery.</title>
        <authorList>
            <person name="Yang F."/>
            <person name="Yang J."/>
            <person name="Zhang X."/>
            <person name="Chen L."/>
            <person name="Jiang Y."/>
            <person name="Yan Y."/>
            <person name="Tang X."/>
            <person name="Wang J."/>
            <person name="Xiong Z."/>
            <person name="Dong J."/>
            <person name="Xue Y."/>
            <person name="Zhu Y."/>
            <person name="Xu X."/>
            <person name="Sun L."/>
            <person name="Chen S."/>
            <person name="Nie H."/>
            <person name="Peng J."/>
            <person name="Xu J."/>
            <person name="Wang Y."/>
            <person name="Yuan Z."/>
            <person name="Wen Y."/>
            <person name="Yao Z."/>
            <person name="Shen Y."/>
            <person name="Qiang B."/>
            <person name="Hou Y."/>
            <person name="Yu J."/>
            <person name="Jin Q."/>
        </authorList>
    </citation>
    <scope>NUCLEOTIDE SEQUENCE [LARGE SCALE GENOMIC DNA]</scope>
    <source>
        <strain>Ss046</strain>
    </source>
</reference>
<name>YIBT_SHISS</name>
<dbReference type="EMBL" id="CP000038">
    <property type="protein sequence ID" value="AAZ90348.1"/>
    <property type="molecule type" value="Genomic_DNA"/>
</dbReference>
<dbReference type="RefSeq" id="WP_000517100.1">
    <property type="nucleotide sequence ID" value="NC_007384.1"/>
</dbReference>
<dbReference type="SMR" id="Q3YVW4"/>
<dbReference type="GeneID" id="93778313"/>
<dbReference type="KEGG" id="ssn:SSON_3806"/>
<dbReference type="HOGENOM" id="CLU_185147_0_0_6"/>
<dbReference type="Proteomes" id="UP000002529">
    <property type="component" value="Chromosome"/>
</dbReference>
<sequence>MGKLGENVPLLIDKAVDFMASSQAFREYLKKLPPRNAIPSGIPDESVPLYLQRLEYYRRLYRPKQVEGQ</sequence>
<accession>Q3YVW4</accession>
<organism>
    <name type="scientific">Shigella sonnei (strain Ss046)</name>
    <dbReference type="NCBI Taxonomy" id="300269"/>
    <lineage>
        <taxon>Bacteria</taxon>
        <taxon>Pseudomonadati</taxon>
        <taxon>Pseudomonadota</taxon>
        <taxon>Gammaproteobacteria</taxon>
        <taxon>Enterobacterales</taxon>
        <taxon>Enterobacteriaceae</taxon>
        <taxon>Shigella</taxon>
    </lineage>
</organism>
<proteinExistence type="predicted"/>